<evidence type="ECO:0000255" key="1">
    <source>
        <dbReference type="HAMAP-Rule" id="MF_01302"/>
    </source>
</evidence>
<evidence type="ECO:0000305" key="2"/>
<gene>
    <name evidence="1" type="primary">rpsH</name>
    <name type="ordered locus">PFL_5568</name>
</gene>
<proteinExistence type="inferred from homology"/>
<accession>Q4K547</accession>
<name>RS8_PSEF5</name>
<comment type="function">
    <text evidence="1">One of the primary rRNA binding proteins, it binds directly to 16S rRNA central domain where it helps coordinate assembly of the platform of the 30S subunit.</text>
</comment>
<comment type="subunit">
    <text evidence="1">Part of the 30S ribosomal subunit. Contacts proteins S5 and S12.</text>
</comment>
<comment type="similarity">
    <text evidence="1">Belongs to the universal ribosomal protein uS8 family.</text>
</comment>
<keyword id="KW-0687">Ribonucleoprotein</keyword>
<keyword id="KW-0689">Ribosomal protein</keyword>
<keyword id="KW-0694">RNA-binding</keyword>
<keyword id="KW-0699">rRNA-binding</keyword>
<organism>
    <name type="scientific">Pseudomonas fluorescens (strain ATCC BAA-477 / NRRL B-23932 / Pf-5)</name>
    <dbReference type="NCBI Taxonomy" id="220664"/>
    <lineage>
        <taxon>Bacteria</taxon>
        <taxon>Pseudomonadati</taxon>
        <taxon>Pseudomonadota</taxon>
        <taxon>Gammaproteobacteria</taxon>
        <taxon>Pseudomonadales</taxon>
        <taxon>Pseudomonadaceae</taxon>
        <taxon>Pseudomonas</taxon>
    </lineage>
</organism>
<sequence>MSMQDPLADMLTRIRNAQMAEKSVVSMPSSTLKVAVAKVLKDEGYIAGYQISSEIKPLLSIELKYFEGRPVIEEVKRVSRPGLRQYKSVEELPKVRGGLGVSIVSTNKGVMTDRAARAAGVGGEVLCTVF</sequence>
<protein>
    <recommendedName>
        <fullName evidence="1">Small ribosomal subunit protein uS8</fullName>
    </recommendedName>
    <alternativeName>
        <fullName evidence="2">30S ribosomal protein S8</fullName>
    </alternativeName>
</protein>
<feature type="chain" id="PRO_0000225882" description="Small ribosomal subunit protein uS8">
    <location>
        <begin position="1"/>
        <end position="130"/>
    </location>
</feature>
<dbReference type="EMBL" id="CP000076">
    <property type="protein sequence ID" value="AAY94773.1"/>
    <property type="molecule type" value="Genomic_DNA"/>
</dbReference>
<dbReference type="RefSeq" id="WP_011063773.1">
    <property type="nucleotide sequence ID" value="NC_004129.6"/>
</dbReference>
<dbReference type="SMR" id="Q4K547"/>
<dbReference type="STRING" id="220664.PFL_5568"/>
<dbReference type="GeneID" id="57478517"/>
<dbReference type="KEGG" id="pfl:PFL_5568"/>
<dbReference type="eggNOG" id="COG0096">
    <property type="taxonomic scope" value="Bacteria"/>
</dbReference>
<dbReference type="HOGENOM" id="CLU_098428_0_0_6"/>
<dbReference type="Proteomes" id="UP000008540">
    <property type="component" value="Chromosome"/>
</dbReference>
<dbReference type="GO" id="GO:1990904">
    <property type="term" value="C:ribonucleoprotein complex"/>
    <property type="evidence" value="ECO:0007669"/>
    <property type="project" value="UniProtKB-KW"/>
</dbReference>
<dbReference type="GO" id="GO:0005840">
    <property type="term" value="C:ribosome"/>
    <property type="evidence" value="ECO:0007669"/>
    <property type="project" value="UniProtKB-KW"/>
</dbReference>
<dbReference type="GO" id="GO:0019843">
    <property type="term" value="F:rRNA binding"/>
    <property type="evidence" value="ECO:0007669"/>
    <property type="project" value="UniProtKB-UniRule"/>
</dbReference>
<dbReference type="GO" id="GO:0003735">
    <property type="term" value="F:structural constituent of ribosome"/>
    <property type="evidence" value="ECO:0007669"/>
    <property type="project" value="InterPro"/>
</dbReference>
<dbReference type="GO" id="GO:0006412">
    <property type="term" value="P:translation"/>
    <property type="evidence" value="ECO:0007669"/>
    <property type="project" value="UniProtKB-UniRule"/>
</dbReference>
<dbReference type="FunFam" id="3.30.1370.30:FF:000003">
    <property type="entry name" value="30S ribosomal protein S8"/>
    <property type="match status" value="1"/>
</dbReference>
<dbReference type="FunFam" id="3.30.1490.10:FF:000001">
    <property type="entry name" value="30S ribosomal protein S8"/>
    <property type="match status" value="1"/>
</dbReference>
<dbReference type="Gene3D" id="3.30.1370.30">
    <property type="match status" value="1"/>
</dbReference>
<dbReference type="Gene3D" id="3.30.1490.10">
    <property type="match status" value="1"/>
</dbReference>
<dbReference type="HAMAP" id="MF_01302_B">
    <property type="entry name" value="Ribosomal_uS8_B"/>
    <property type="match status" value="1"/>
</dbReference>
<dbReference type="InterPro" id="IPR000630">
    <property type="entry name" value="Ribosomal_uS8"/>
</dbReference>
<dbReference type="InterPro" id="IPR047863">
    <property type="entry name" value="Ribosomal_uS8_CS"/>
</dbReference>
<dbReference type="InterPro" id="IPR035987">
    <property type="entry name" value="Ribosomal_uS8_sf"/>
</dbReference>
<dbReference type="NCBIfam" id="NF001109">
    <property type="entry name" value="PRK00136.1"/>
    <property type="match status" value="1"/>
</dbReference>
<dbReference type="PANTHER" id="PTHR11758">
    <property type="entry name" value="40S RIBOSOMAL PROTEIN S15A"/>
    <property type="match status" value="1"/>
</dbReference>
<dbReference type="Pfam" id="PF00410">
    <property type="entry name" value="Ribosomal_S8"/>
    <property type="match status" value="1"/>
</dbReference>
<dbReference type="SUPFAM" id="SSF56047">
    <property type="entry name" value="Ribosomal protein S8"/>
    <property type="match status" value="1"/>
</dbReference>
<dbReference type="PROSITE" id="PS00053">
    <property type="entry name" value="RIBOSOMAL_S8"/>
    <property type="match status" value="1"/>
</dbReference>
<reference key="1">
    <citation type="journal article" date="2005" name="Nat. Biotechnol.">
        <title>Complete genome sequence of the plant commensal Pseudomonas fluorescens Pf-5.</title>
        <authorList>
            <person name="Paulsen I.T."/>
            <person name="Press C.M."/>
            <person name="Ravel J."/>
            <person name="Kobayashi D.Y."/>
            <person name="Myers G.S.A."/>
            <person name="Mavrodi D.V."/>
            <person name="DeBoy R.T."/>
            <person name="Seshadri R."/>
            <person name="Ren Q."/>
            <person name="Madupu R."/>
            <person name="Dodson R.J."/>
            <person name="Durkin A.S."/>
            <person name="Brinkac L.M."/>
            <person name="Daugherty S.C."/>
            <person name="Sullivan S.A."/>
            <person name="Rosovitz M.J."/>
            <person name="Gwinn M.L."/>
            <person name="Zhou L."/>
            <person name="Schneider D.J."/>
            <person name="Cartinhour S.W."/>
            <person name="Nelson W.C."/>
            <person name="Weidman J."/>
            <person name="Watkins K."/>
            <person name="Tran K."/>
            <person name="Khouri H."/>
            <person name="Pierson E.A."/>
            <person name="Pierson L.S. III"/>
            <person name="Thomashow L.S."/>
            <person name="Loper J.E."/>
        </authorList>
    </citation>
    <scope>NUCLEOTIDE SEQUENCE [LARGE SCALE GENOMIC DNA]</scope>
    <source>
        <strain>ATCC BAA-477 / NRRL B-23932 / Pf-5</strain>
    </source>
</reference>